<dbReference type="EMBL" id="AE000666">
    <property type="protein sequence ID" value="AAB85787.1"/>
    <property type="molecule type" value="Genomic_DNA"/>
</dbReference>
<dbReference type="PIR" id="H69040">
    <property type="entry name" value="H69040"/>
</dbReference>
<dbReference type="RefSeq" id="WP_010876922.1">
    <property type="nucleotide sequence ID" value="NC_000916.1"/>
</dbReference>
<dbReference type="SMR" id="O27364"/>
<dbReference type="FunCoup" id="O27364">
    <property type="interactions" value="121"/>
</dbReference>
<dbReference type="STRING" id="187420.MTH_1309"/>
<dbReference type="PaxDb" id="187420-MTH_1309"/>
<dbReference type="EnsemblBacteria" id="AAB85787">
    <property type="protein sequence ID" value="AAB85787"/>
    <property type="gene ID" value="MTH_1309"/>
</dbReference>
<dbReference type="KEGG" id="mth:MTH_1309"/>
<dbReference type="PATRIC" id="fig|187420.15.peg.1278"/>
<dbReference type="HOGENOM" id="CLU_199465_0_0_2"/>
<dbReference type="InParanoid" id="O27364"/>
<dbReference type="Proteomes" id="UP000005223">
    <property type="component" value="Chromosome"/>
</dbReference>
<dbReference type="GO" id="GO:1990904">
    <property type="term" value="C:ribonucleoprotein complex"/>
    <property type="evidence" value="ECO:0007669"/>
    <property type="project" value="UniProtKB-KW"/>
</dbReference>
<dbReference type="GO" id="GO:0005840">
    <property type="term" value="C:ribosome"/>
    <property type="evidence" value="ECO:0007669"/>
    <property type="project" value="UniProtKB-KW"/>
</dbReference>
<dbReference type="GO" id="GO:0003735">
    <property type="term" value="F:structural constituent of ribosome"/>
    <property type="evidence" value="ECO:0007669"/>
    <property type="project" value="InterPro"/>
</dbReference>
<dbReference type="GO" id="GO:0008270">
    <property type="term" value="F:zinc ion binding"/>
    <property type="evidence" value="ECO:0007669"/>
    <property type="project" value="UniProtKB-UniRule"/>
</dbReference>
<dbReference type="GO" id="GO:0006412">
    <property type="term" value="P:translation"/>
    <property type="evidence" value="ECO:0007669"/>
    <property type="project" value="UniProtKB-UniRule"/>
</dbReference>
<dbReference type="Gene3D" id="2.20.25.100">
    <property type="entry name" value="Zn-binding ribosomal proteins"/>
    <property type="match status" value="1"/>
</dbReference>
<dbReference type="HAMAP" id="MF_00371">
    <property type="entry name" value="Ribosomal_eS27"/>
    <property type="match status" value="1"/>
</dbReference>
<dbReference type="InterPro" id="IPR000592">
    <property type="entry name" value="Ribosomal_eS27"/>
</dbReference>
<dbReference type="InterPro" id="IPR023407">
    <property type="entry name" value="Ribosomal_eS27_Zn-bd_dom_sf"/>
</dbReference>
<dbReference type="InterPro" id="IPR011332">
    <property type="entry name" value="Ribosomal_zn-bd"/>
</dbReference>
<dbReference type="NCBIfam" id="NF001629">
    <property type="entry name" value="PRK00415.1"/>
    <property type="match status" value="1"/>
</dbReference>
<dbReference type="Pfam" id="PF01667">
    <property type="entry name" value="Ribosomal_S27e"/>
    <property type="match status" value="1"/>
</dbReference>
<dbReference type="SUPFAM" id="SSF57829">
    <property type="entry name" value="Zn-binding ribosomal proteins"/>
    <property type="match status" value="1"/>
</dbReference>
<dbReference type="PROSITE" id="PS01168">
    <property type="entry name" value="RIBOSOMAL_S27E"/>
    <property type="match status" value="1"/>
</dbReference>
<reference key="1">
    <citation type="journal article" date="1997" name="J. Bacteriol.">
        <title>Complete genome sequence of Methanobacterium thermoautotrophicum deltaH: functional analysis and comparative genomics.</title>
        <authorList>
            <person name="Smith D.R."/>
            <person name="Doucette-Stamm L.A."/>
            <person name="Deloughery C."/>
            <person name="Lee H.-M."/>
            <person name="Dubois J."/>
            <person name="Aldredge T."/>
            <person name="Bashirzadeh R."/>
            <person name="Blakely D."/>
            <person name="Cook R."/>
            <person name="Gilbert K."/>
            <person name="Harrison D."/>
            <person name="Hoang L."/>
            <person name="Keagle P."/>
            <person name="Lumm W."/>
            <person name="Pothier B."/>
            <person name="Qiu D."/>
            <person name="Spadafora R."/>
            <person name="Vicare R."/>
            <person name="Wang Y."/>
            <person name="Wierzbowski J."/>
            <person name="Gibson R."/>
            <person name="Jiwani N."/>
            <person name="Caruso A."/>
            <person name="Bush D."/>
            <person name="Safer H."/>
            <person name="Patwell D."/>
            <person name="Prabhakar S."/>
            <person name="McDougall S."/>
            <person name="Shimer G."/>
            <person name="Goyal A."/>
            <person name="Pietrovski S."/>
            <person name="Church G.M."/>
            <person name="Daniels C.J."/>
            <person name="Mao J.-I."/>
            <person name="Rice P."/>
            <person name="Noelling J."/>
            <person name="Reeve J.N."/>
        </authorList>
    </citation>
    <scope>NUCLEOTIDE SEQUENCE [LARGE SCALE GENOMIC DNA]</scope>
    <source>
        <strain>ATCC 29096 / DSM 1053 / JCM 10044 / NBRC 100330 / Delta H</strain>
    </source>
</reference>
<name>RS27_METTH</name>
<keyword id="KW-0479">Metal-binding</keyword>
<keyword id="KW-1185">Reference proteome</keyword>
<keyword id="KW-0687">Ribonucleoprotein</keyword>
<keyword id="KW-0689">Ribosomal protein</keyword>
<keyword id="KW-0862">Zinc</keyword>
<keyword id="KW-0863">Zinc-finger</keyword>
<comment type="cofactor">
    <cofactor evidence="1">
        <name>Zn(2+)</name>
        <dbReference type="ChEBI" id="CHEBI:29105"/>
    </cofactor>
    <text evidence="1">Binds 1 zinc ion per subunit.</text>
</comment>
<comment type="subunit">
    <text evidence="1">Part of the 30S ribosomal subunit.</text>
</comment>
<comment type="similarity">
    <text evidence="1">Belongs to the eukaryotic ribosomal protein eS27 family.</text>
</comment>
<accession>O27364</accession>
<protein>
    <recommendedName>
        <fullName evidence="1">Small ribosomal subunit protein eS27</fullName>
    </recommendedName>
</protein>
<gene>
    <name evidence="1" type="primary">rps27e</name>
    <name type="ordered locus">MTH_1309</name>
</gene>
<evidence type="ECO:0000255" key="1">
    <source>
        <dbReference type="HAMAP-Rule" id="MF_00371"/>
    </source>
</evidence>
<proteinExistence type="inferred from homology"/>
<organism>
    <name type="scientific">Methanothermobacter thermautotrophicus (strain ATCC 29096 / DSM 1053 / JCM 10044 / NBRC 100330 / Delta H)</name>
    <name type="common">Methanobacterium thermoautotrophicum</name>
    <dbReference type="NCBI Taxonomy" id="187420"/>
    <lineage>
        <taxon>Archaea</taxon>
        <taxon>Methanobacteriati</taxon>
        <taxon>Methanobacteriota</taxon>
        <taxon>Methanomada group</taxon>
        <taxon>Methanobacteria</taxon>
        <taxon>Methanobacteriales</taxon>
        <taxon>Methanobacteriaceae</taxon>
        <taxon>Methanothermobacter</taxon>
    </lineage>
</organism>
<sequence>MIGVIFYNTKGNFLRVKCLDCGNQQVVFDRAASYVQCIICGKTLVEPTGGKSKIKAQILEVLD</sequence>
<feature type="chain" id="PRO_0000149075" description="Small ribosomal subunit protein eS27">
    <location>
        <begin position="1"/>
        <end position="63"/>
    </location>
</feature>
<feature type="zinc finger region" description="C4-type" evidence="1">
    <location>
        <begin position="18"/>
        <end position="40"/>
    </location>
</feature>
<feature type="binding site" evidence="1">
    <location>
        <position position="18"/>
    </location>
    <ligand>
        <name>Zn(2+)</name>
        <dbReference type="ChEBI" id="CHEBI:29105"/>
    </ligand>
</feature>
<feature type="binding site" evidence="1">
    <location>
        <position position="21"/>
    </location>
    <ligand>
        <name>Zn(2+)</name>
        <dbReference type="ChEBI" id="CHEBI:29105"/>
    </ligand>
</feature>
<feature type="binding site" evidence="1">
    <location>
        <position position="37"/>
    </location>
    <ligand>
        <name>Zn(2+)</name>
        <dbReference type="ChEBI" id="CHEBI:29105"/>
    </ligand>
</feature>
<feature type="binding site" evidence="1">
    <location>
        <position position="40"/>
    </location>
    <ligand>
        <name>Zn(2+)</name>
        <dbReference type="ChEBI" id="CHEBI:29105"/>
    </ligand>
</feature>